<evidence type="ECO:0000255" key="1">
    <source>
        <dbReference type="HAMAP-Rule" id="MF_00444"/>
    </source>
</evidence>
<sequence>MIPVVIEQTSRGERSYDIYSRLLKDRIIMLTGPVEDNMANSVIAQLLFLDAQDNTKDIYLYVNTPGGSVSAGLAIVDTMNFIKADVQTIVMGMAASMGTVIASSGTKGKRFMLPNAEYMIHQPMGGTGGGTQQTDMAIAAEHLLKTRHRLEKILAQNAGKTIKQIHKDAERDYWMSAEETLAYGFIDEIMENNELK</sequence>
<accession>P0DA35</accession>
<accession>P69885</accession>
<accession>P82554</accession>
<accession>Q9A192</accession>
<name>CLPP_STRPQ</name>
<dbReference type="EC" id="3.4.21.92" evidence="1"/>
<dbReference type="EMBL" id="BA000034">
    <property type="protein sequence ID" value="BAC64667.1"/>
    <property type="molecule type" value="Genomic_DNA"/>
</dbReference>
<dbReference type="RefSeq" id="WP_002985850.1">
    <property type="nucleotide sequence ID" value="NC_004606.1"/>
</dbReference>
<dbReference type="SMR" id="P0DA35"/>
<dbReference type="MEROPS" id="S14.001"/>
<dbReference type="KEGG" id="sps:SPs1572"/>
<dbReference type="HOGENOM" id="CLU_058707_3_2_9"/>
<dbReference type="GO" id="GO:0005737">
    <property type="term" value="C:cytoplasm"/>
    <property type="evidence" value="ECO:0007669"/>
    <property type="project" value="UniProtKB-SubCell"/>
</dbReference>
<dbReference type="GO" id="GO:0009368">
    <property type="term" value="C:endopeptidase Clp complex"/>
    <property type="evidence" value="ECO:0007669"/>
    <property type="project" value="TreeGrafter"/>
</dbReference>
<dbReference type="GO" id="GO:0004176">
    <property type="term" value="F:ATP-dependent peptidase activity"/>
    <property type="evidence" value="ECO:0007669"/>
    <property type="project" value="InterPro"/>
</dbReference>
<dbReference type="GO" id="GO:0051117">
    <property type="term" value="F:ATPase binding"/>
    <property type="evidence" value="ECO:0007669"/>
    <property type="project" value="TreeGrafter"/>
</dbReference>
<dbReference type="GO" id="GO:0004252">
    <property type="term" value="F:serine-type endopeptidase activity"/>
    <property type="evidence" value="ECO:0007669"/>
    <property type="project" value="UniProtKB-UniRule"/>
</dbReference>
<dbReference type="GO" id="GO:0006515">
    <property type="term" value="P:protein quality control for misfolded or incompletely synthesized proteins"/>
    <property type="evidence" value="ECO:0007669"/>
    <property type="project" value="TreeGrafter"/>
</dbReference>
<dbReference type="CDD" id="cd07017">
    <property type="entry name" value="S14_ClpP_2"/>
    <property type="match status" value="1"/>
</dbReference>
<dbReference type="FunFam" id="3.90.226.10:FF:000014">
    <property type="entry name" value="ATP-dependent Clp protease proteolytic subunit"/>
    <property type="match status" value="1"/>
</dbReference>
<dbReference type="Gene3D" id="3.90.226.10">
    <property type="entry name" value="2-enoyl-CoA Hydratase, Chain A, domain 1"/>
    <property type="match status" value="1"/>
</dbReference>
<dbReference type="HAMAP" id="MF_00444">
    <property type="entry name" value="ClpP"/>
    <property type="match status" value="1"/>
</dbReference>
<dbReference type="InterPro" id="IPR001907">
    <property type="entry name" value="ClpP"/>
</dbReference>
<dbReference type="InterPro" id="IPR029045">
    <property type="entry name" value="ClpP/crotonase-like_dom_sf"/>
</dbReference>
<dbReference type="InterPro" id="IPR023562">
    <property type="entry name" value="ClpP/TepA"/>
</dbReference>
<dbReference type="InterPro" id="IPR033135">
    <property type="entry name" value="ClpP_His_AS"/>
</dbReference>
<dbReference type="InterPro" id="IPR018215">
    <property type="entry name" value="ClpP_Ser_AS"/>
</dbReference>
<dbReference type="NCBIfam" id="NF001368">
    <property type="entry name" value="PRK00277.1"/>
    <property type="match status" value="1"/>
</dbReference>
<dbReference type="NCBIfam" id="NF009205">
    <property type="entry name" value="PRK12553.1"/>
    <property type="match status" value="1"/>
</dbReference>
<dbReference type="PANTHER" id="PTHR10381">
    <property type="entry name" value="ATP-DEPENDENT CLP PROTEASE PROTEOLYTIC SUBUNIT"/>
    <property type="match status" value="1"/>
</dbReference>
<dbReference type="PANTHER" id="PTHR10381:SF70">
    <property type="entry name" value="ATP-DEPENDENT CLP PROTEASE PROTEOLYTIC SUBUNIT"/>
    <property type="match status" value="1"/>
</dbReference>
<dbReference type="Pfam" id="PF00574">
    <property type="entry name" value="CLP_protease"/>
    <property type="match status" value="1"/>
</dbReference>
<dbReference type="PRINTS" id="PR00127">
    <property type="entry name" value="CLPPROTEASEP"/>
</dbReference>
<dbReference type="SUPFAM" id="SSF52096">
    <property type="entry name" value="ClpP/crotonase"/>
    <property type="match status" value="1"/>
</dbReference>
<dbReference type="PROSITE" id="PS00382">
    <property type="entry name" value="CLP_PROTEASE_HIS"/>
    <property type="match status" value="1"/>
</dbReference>
<dbReference type="PROSITE" id="PS00381">
    <property type="entry name" value="CLP_PROTEASE_SER"/>
    <property type="match status" value="1"/>
</dbReference>
<gene>
    <name evidence="1" type="primary">clpP</name>
    <name type="synonym">clpP.1</name>
    <name type="ordered locus">SPs1572</name>
</gene>
<comment type="function">
    <text evidence="1">Cleaves peptides in various proteins in a process that requires ATP hydrolysis. Has a chymotrypsin-like activity. Plays a major role in the degradation of misfolded proteins.</text>
</comment>
<comment type="catalytic activity">
    <reaction evidence="1">
        <text>Hydrolysis of proteins to small peptides in the presence of ATP and magnesium. alpha-casein is the usual test substrate. In the absence of ATP, only oligopeptides shorter than five residues are hydrolyzed (such as succinyl-Leu-Tyr-|-NHMec, and Leu-Tyr-Leu-|-Tyr-Trp, in which cleavage of the -Tyr-|-Leu- and -Tyr-|-Trp bonds also occurs).</text>
        <dbReference type="EC" id="3.4.21.92"/>
    </reaction>
</comment>
<comment type="subunit">
    <text evidence="1">Fourteen ClpP subunits assemble into 2 heptameric rings which stack back to back to give a disk-like structure with a central cavity, resembling the structure of eukaryotic proteasomes.</text>
</comment>
<comment type="subcellular location">
    <subcellularLocation>
        <location evidence="1">Cytoplasm</location>
    </subcellularLocation>
</comment>
<comment type="similarity">
    <text evidence="1">Belongs to the peptidase S14 family.</text>
</comment>
<protein>
    <recommendedName>
        <fullName evidence="1">ATP-dependent Clp protease proteolytic subunit</fullName>
        <ecNumber evidence="1">3.4.21.92</ecNumber>
    </recommendedName>
    <alternativeName>
        <fullName evidence="1">Endopeptidase Clp</fullName>
    </alternativeName>
</protein>
<feature type="chain" id="PRO_0000411305" description="ATP-dependent Clp protease proteolytic subunit">
    <location>
        <begin position="1"/>
        <end position="196"/>
    </location>
</feature>
<feature type="active site" description="Nucleophile" evidence="1">
    <location>
        <position position="96"/>
    </location>
</feature>
<feature type="active site" evidence="1">
    <location>
        <position position="121"/>
    </location>
</feature>
<reference key="1">
    <citation type="journal article" date="2003" name="Genome Res.">
        <title>Genome sequence of an M3 strain of Streptococcus pyogenes reveals a large-scale genomic rearrangement in invasive strains and new insights into phage evolution.</title>
        <authorList>
            <person name="Nakagawa I."/>
            <person name="Kurokawa K."/>
            <person name="Yamashita A."/>
            <person name="Nakata M."/>
            <person name="Tomiyasu Y."/>
            <person name="Okahashi N."/>
            <person name="Kawabata S."/>
            <person name="Yamazaki K."/>
            <person name="Shiba T."/>
            <person name="Yasunaga T."/>
            <person name="Hayashi H."/>
            <person name="Hattori M."/>
            <person name="Hamada S."/>
        </authorList>
    </citation>
    <scope>NUCLEOTIDE SEQUENCE [LARGE SCALE GENOMIC DNA]</scope>
    <source>
        <strain>SSI-1</strain>
    </source>
</reference>
<organism>
    <name type="scientific">Streptococcus pyogenes serotype M3 (strain SSI-1)</name>
    <dbReference type="NCBI Taxonomy" id="193567"/>
    <lineage>
        <taxon>Bacteria</taxon>
        <taxon>Bacillati</taxon>
        <taxon>Bacillota</taxon>
        <taxon>Bacilli</taxon>
        <taxon>Lactobacillales</taxon>
        <taxon>Streptococcaceae</taxon>
        <taxon>Streptococcus</taxon>
    </lineage>
</organism>
<keyword id="KW-0963">Cytoplasm</keyword>
<keyword id="KW-0378">Hydrolase</keyword>
<keyword id="KW-0645">Protease</keyword>
<keyword id="KW-0720">Serine protease</keyword>
<proteinExistence type="inferred from homology"/>